<keyword id="KW-0030">Aminoacyl-tRNA synthetase</keyword>
<keyword id="KW-0067">ATP-binding</keyword>
<keyword id="KW-0963">Cytoplasm</keyword>
<keyword id="KW-0436">Ligase</keyword>
<keyword id="KW-0460">Magnesium</keyword>
<keyword id="KW-0479">Metal-binding</keyword>
<keyword id="KW-0547">Nucleotide-binding</keyword>
<keyword id="KW-0648">Protein biosynthesis</keyword>
<sequence>MTELVTLETQLMAEVAAATDEQSIEAVRVAALGKKGSVSELLKTLGSMSPEERQTRGAAINALKNSVTDAINARKGALKDAAIDAKLKAETVDVSLPVRSSPAERGRIHPISQIVDEITAIFGDMGFSIAEGPDVETDYYNFTALNFPEGHPAREMHDTFFFQPDEKGERKVLRTHTSPVQIRTMEAQKPPIRIIIPGKTYRQDSDATHSPMFHQVEGLVIDKTANVANIRWVLEEFCKTFFEVDNVTMRFRPSFFPFTEPSFEVDIQCDRSGPIVKFGEGTDWMEILGCGMVHPNVLRHGGLDPDEYQGFAWGMGLDRIAMLKYGMPDLRDFFNADVRWMNHYGFRPLDMPTLFGGLSA</sequence>
<accession>B9J7G4</accession>
<proteinExistence type="inferred from homology"/>
<gene>
    <name evidence="1" type="primary">pheS</name>
    <name type="ordered locus">Arad_0444</name>
</gene>
<comment type="catalytic activity">
    <reaction evidence="1">
        <text>tRNA(Phe) + L-phenylalanine + ATP = L-phenylalanyl-tRNA(Phe) + AMP + diphosphate + H(+)</text>
        <dbReference type="Rhea" id="RHEA:19413"/>
        <dbReference type="Rhea" id="RHEA-COMP:9668"/>
        <dbReference type="Rhea" id="RHEA-COMP:9699"/>
        <dbReference type="ChEBI" id="CHEBI:15378"/>
        <dbReference type="ChEBI" id="CHEBI:30616"/>
        <dbReference type="ChEBI" id="CHEBI:33019"/>
        <dbReference type="ChEBI" id="CHEBI:58095"/>
        <dbReference type="ChEBI" id="CHEBI:78442"/>
        <dbReference type="ChEBI" id="CHEBI:78531"/>
        <dbReference type="ChEBI" id="CHEBI:456215"/>
        <dbReference type="EC" id="6.1.1.20"/>
    </reaction>
</comment>
<comment type="cofactor">
    <cofactor evidence="1">
        <name>Mg(2+)</name>
        <dbReference type="ChEBI" id="CHEBI:18420"/>
    </cofactor>
    <text evidence="1">Binds 2 magnesium ions per tetramer.</text>
</comment>
<comment type="subunit">
    <text evidence="1">Tetramer of two alpha and two beta subunits.</text>
</comment>
<comment type="subcellular location">
    <subcellularLocation>
        <location evidence="1">Cytoplasm</location>
    </subcellularLocation>
</comment>
<comment type="similarity">
    <text evidence="1">Belongs to the class-II aminoacyl-tRNA synthetase family. Phe-tRNA synthetase alpha subunit type 1 subfamily.</text>
</comment>
<reference key="1">
    <citation type="journal article" date="2009" name="J. Bacteriol.">
        <title>Genome sequences of three Agrobacterium biovars help elucidate the evolution of multichromosome genomes in bacteria.</title>
        <authorList>
            <person name="Slater S.C."/>
            <person name="Goldman B.S."/>
            <person name="Goodner B."/>
            <person name="Setubal J.C."/>
            <person name="Farrand S.K."/>
            <person name="Nester E.W."/>
            <person name="Burr T.J."/>
            <person name="Banta L."/>
            <person name="Dickerman A.W."/>
            <person name="Paulsen I."/>
            <person name="Otten L."/>
            <person name="Suen G."/>
            <person name="Welch R."/>
            <person name="Almeida N.F."/>
            <person name="Arnold F."/>
            <person name="Burton O.T."/>
            <person name="Du Z."/>
            <person name="Ewing A."/>
            <person name="Godsy E."/>
            <person name="Heisel S."/>
            <person name="Houmiel K.L."/>
            <person name="Jhaveri J."/>
            <person name="Lu J."/>
            <person name="Miller N.M."/>
            <person name="Norton S."/>
            <person name="Chen Q."/>
            <person name="Phoolcharoen W."/>
            <person name="Ohlin V."/>
            <person name="Ondrusek D."/>
            <person name="Pride N."/>
            <person name="Stricklin S.L."/>
            <person name="Sun J."/>
            <person name="Wheeler C."/>
            <person name="Wilson L."/>
            <person name="Zhu H."/>
            <person name="Wood D.W."/>
        </authorList>
    </citation>
    <scope>NUCLEOTIDE SEQUENCE [LARGE SCALE GENOMIC DNA]</scope>
    <source>
        <strain>K84 / ATCC BAA-868</strain>
    </source>
</reference>
<evidence type="ECO:0000255" key="1">
    <source>
        <dbReference type="HAMAP-Rule" id="MF_00281"/>
    </source>
</evidence>
<name>SYFA_RHIR8</name>
<feature type="chain" id="PRO_1000199292" description="Phenylalanine--tRNA ligase alpha subunit">
    <location>
        <begin position="1"/>
        <end position="360"/>
    </location>
</feature>
<feature type="binding site" evidence="1">
    <location>
        <position position="260"/>
    </location>
    <ligand>
        <name>Mg(2+)</name>
        <dbReference type="ChEBI" id="CHEBI:18420"/>
        <note>shared with beta subunit</note>
    </ligand>
</feature>
<protein>
    <recommendedName>
        <fullName evidence="1">Phenylalanine--tRNA ligase alpha subunit</fullName>
        <ecNumber evidence="1">6.1.1.20</ecNumber>
    </recommendedName>
    <alternativeName>
        <fullName evidence="1">Phenylalanyl-tRNA synthetase alpha subunit</fullName>
        <shortName evidence="1">PheRS</shortName>
    </alternativeName>
</protein>
<organism>
    <name type="scientific">Rhizobium rhizogenes (strain K84 / ATCC BAA-868)</name>
    <name type="common">Agrobacterium radiobacter</name>
    <dbReference type="NCBI Taxonomy" id="311403"/>
    <lineage>
        <taxon>Bacteria</taxon>
        <taxon>Pseudomonadati</taxon>
        <taxon>Pseudomonadota</taxon>
        <taxon>Alphaproteobacteria</taxon>
        <taxon>Hyphomicrobiales</taxon>
        <taxon>Rhizobiaceae</taxon>
        <taxon>Rhizobium/Agrobacterium group</taxon>
        <taxon>Rhizobium</taxon>
    </lineage>
</organism>
<dbReference type="EC" id="6.1.1.20" evidence="1"/>
<dbReference type="EMBL" id="CP000628">
    <property type="protein sequence ID" value="ACM25136.1"/>
    <property type="molecule type" value="Genomic_DNA"/>
</dbReference>
<dbReference type="RefSeq" id="WP_007692600.1">
    <property type="nucleotide sequence ID" value="NC_011985.1"/>
</dbReference>
<dbReference type="SMR" id="B9J7G4"/>
<dbReference type="STRING" id="311403.Arad_0444"/>
<dbReference type="GeneID" id="86850779"/>
<dbReference type="KEGG" id="ara:Arad_0444"/>
<dbReference type="eggNOG" id="COG0016">
    <property type="taxonomic scope" value="Bacteria"/>
</dbReference>
<dbReference type="HOGENOM" id="CLU_025086_0_1_5"/>
<dbReference type="Proteomes" id="UP000001600">
    <property type="component" value="Chromosome 1"/>
</dbReference>
<dbReference type="GO" id="GO:0005737">
    <property type="term" value="C:cytoplasm"/>
    <property type="evidence" value="ECO:0007669"/>
    <property type="project" value="UniProtKB-SubCell"/>
</dbReference>
<dbReference type="GO" id="GO:0005524">
    <property type="term" value="F:ATP binding"/>
    <property type="evidence" value="ECO:0007669"/>
    <property type="project" value="UniProtKB-UniRule"/>
</dbReference>
<dbReference type="GO" id="GO:0000287">
    <property type="term" value="F:magnesium ion binding"/>
    <property type="evidence" value="ECO:0007669"/>
    <property type="project" value="UniProtKB-UniRule"/>
</dbReference>
<dbReference type="GO" id="GO:0004826">
    <property type="term" value="F:phenylalanine-tRNA ligase activity"/>
    <property type="evidence" value="ECO:0007669"/>
    <property type="project" value="UniProtKB-UniRule"/>
</dbReference>
<dbReference type="GO" id="GO:0000049">
    <property type="term" value="F:tRNA binding"/>
    <property type="evidence" value="ECO:0007669"/>
    <property type="project" value="InterPro"/>
</dbReference>
<dbReference type="GO" id="GO:0006432">
    <property type="term" value="P:phenylalanyl-tRNA aminoacylation"/>
    <property type="evidence" value="ECO:0007669"/>
    <property type="project" value="UniProtKB-UniRule"/>
</dbReference>
<dbReference type="CDD" id="cd00496">
    <property type="entry name" value="PheRS_alpha_core"/>
    <property type="match status" value="1"/>
</dbReference>
<dbReference type="FunFam" id="3.30.930.10:FF:000003">
    <property type="entry name" value="Phenylalanine--tRNA ligase alpha subunit"/>
    <property type="match status" value="1"/>
</dbReference>
<dbReference type="Gene3D" id="3.30.930.10">
    <property type="entry name" value="Bira Bifunctional Protein, Domain 2"/>
    <property type="match status" value="1"/>
</dbReference>
<dbReference type="HAMAP" id="MF_00281">
    <property type="entry name" value="Phe_tRNA_synth_alpha1"/>
    <property type="match status" value="1"/>
</dbReference>
<dbReference type="InterPro" id="IPR006195">
    <property type="entry name" value="aa-tRNA-synth_II"/>
</dbReference>
<dbReference type="InterPro" id="IPR045864">
    <property type="entry name" value="aa-tRNA-synth_II/BPL/LPL"/>
</dbReference>
<dbReference type="InterPro" id="IPR004529">
    <property type="entry name" value="Phe-tRNA-synth_IIc_asu"/>
</dbReference>
<dbReference type="InterPro" id="IPR004188">
    <property type="entry name" value="Phe-tRNA_ligase_II_N"/>
</dbReference>
<dbReference type="InterPro" id="IPR022911">
    <property type="entry name" value="Phe_tRNA_ligase_alpha1_bac"/>
</dbReference>
<dbReference type="InterPro" id="IPR002319">
    <property type="entry name" value="Phenylalanyl-tRNA_Synthase"/>
</dbReference>
<dbReference type="InterPro" id="IPR010978">
    <property type="entry name" value="tRNA-bd_arm"/>
</dbReference>
<dbReference type="NCBIfam" id="TIGR00468">
    <property type="entry name" value="pheS"/>
    <property type="match status" value="1"/>
</dbReference>
<dbReference type="PANTHER" id="PTHR11538:SF41">
    <property type="entry name" value="PHENYLALANINE--TRNA LIGASE, MITOCHONDRIAL"/>
    <property type="match status" value="1"/>
</dbReference>
<dbReference type="PANTHER" id="PTHR11538">
    <property type="entry name" value="PHENYLALANYL-TRNA SYNTHETASE"/>
    <property type="match status" value="1"/>
</dbReference>
<dbReference type="Pfam" id="PF02912">
    <property type="entry name" value="Phe_tRNA-synt_N"/>
    <property type="match status" value="1"/>
</dbReference>
<dbReference type="Pfam" id="PF01409">
    <property type="entry name" value="tRNA-synt_2d"/>
    <property type="match status" value="1"/>
</dbReference>
<dbReference type="SUPFAM" id="SSF55681">
    <property type="entry name" value="Class II aaRS and biotin synthetases"/>
    <property type="match status" value="1"/>
</dbReference>
<dbReference type="SUPFAM" id="SSF46589">
    <property type="entry name" value="tRNA-binding arm"/>
    <property type="match status" value="1"/>
</dbReference>
<dbReference type="PROSITE" id="PS50862">
    <property type="entry name" value="AA_TRNA_LIGASE_II"/>
    <property type="match status" value="1"/>
</dbReference>